<name>SYI_CHLAB</name>
<comment type="function">
    <text evidence="1">Catalyzes the attachment of isoleucine to tRNA(Ile). As IleRS can inadvertently accommodate and process structurally similar amino acids such as valine, to avoid such errors it has two additional distinct tRNA(Ile)-dependent editing activities. One activity is designated as 'pretransfer' editing and involves the hydrolysis of activated Val-AMP. The other activity is designated 'posttransfer' editing and involves deacylation of mischarged Val-tRNA(Ile).</text>
</comment>
<comment type="catalytic activity">
    <reaction evidence="1">
        <text>tRNA(Ile) + L-isoleucine + ATP = L-isoleucyl-tRNA(Ile) + AMP + diphosphate</text>
        <dbReference type="Rhea" id="RHEA:11060"/>
        <dbReference type="Rhea" id="RHEA-COMP:9666"/>
        <dbReference type="Rhea" id="RHEA-COMP:9695"/>
        <dbReference type="ChEBI" id="CHEBI:30616"/>
        <dbReference type="ChEBI" id="CHEBI:33019"/>
        <dbReference type="ChEBI" id="CHEBI:58045"/>
        <dbReference type="ChEBI" id="CHEBI:78442"/>
        <dbReference type="ChEBI" id="CHEBI:78528"/>
        <dbReference type="ChEBI" id="CHEBI:456215"/>
        <dbReference type="EC" id="6.1.1.5"/>
    </reaction>
</comment>
<comment type="cofactor">
    <cofactor evidence="1">
        <name>Zn(2+)</name>
        <dbReference type="ChEBI" id="CHEBI:29105"/>
    </cofactor>
</comment>
<comment type="subunit">
    <text evidence="1">Monomer.</text>
</comment>
<comment type="subcellular location">
    <subcellularLocation>
        <location evidence="1">Cytoplasm</location>
    </subcellularLocation>
</comment>
<comment type="domain">
    <text evidence="1">IleRS has two distinct active sites: one for aminoacylation and one for editing. The misactivated valine is translocated from the active site to the editing site, which sterically excludes the correctly activated isoleucine. The single editing site contains two valyl binding pockets, one specific for each substrate (Val-AMP or Val-tRNA(Ile)).</text>
</comment>
<comment type="similarity">
    <text evidence="1">Belongs to the class-I aminoacyl-tRNA synthetase family. IleS type 2 subfamily.</text>
</comment>
<gene>
    <name evidence="1" type="primary">ileS</name>
    <name type="ordered locus">CAB634</name>
</gene>
<protein>
    <recommendedName>
        <fullName evidence="1">Isoleucine--tRNA ligase</fullName>
        <ecNumber evidence="1">6.1.1.5</ecNumber>
    </recommendedName>
    <alternativeName>
        <fullName evidence="1">Isoleucyl-tRNA synthetase</fullName>
        <shortName evidence="1">IleRS</shortName>
    </alternativeName>
</protein>
<organism>
    <name type="scientific">Chlamydia abortus (strain DSM 27085 / S26/3)</name>
    <name type="common">Chlamydophila abortus</name>
    <dbReference type="NCBI Taxonomy" id="218497"/>
    <lineage>
        <taxon>Bacteria</taxon>
        <taxon>Pseudomonadati</taxon>
        <taxon>Chlamydiota</taxon>
        <taxon>Chlamydiia</taxon>
        <taxon>Chlamydiales</taxon>
        <taxon>Chlamydiaceae</taxon>
        <taxon>Chlamydia/Chlamydophila group</taxon>
        <taxon>Chlamydia</taxon>
    </lineage>
</organism>
<proteinExistence type="inferred from homology"/>
<sequence length="1043" mass="119728">MHTEGEGSKESLASREERILNFWKTQEIFQKSLKNREGRTLYSFYDGPPFATGLPHYGHLLAGTIKDVVGRFATMDGYYVPRRFGWDCHGVPVEYEVEKSLNLTTPGAIEDFGVAKFNEECRKIVFRYVDEWEHYIYRVGRWVDFSATWKTMDASFMESVWWVFRSLYDQGLVYEGVKVVPFSTKLGTPLSNFEAGQNYKEVDDPSVVIKFALHGDPGSLLVWTTTPWTLVSNMAVAVGPEITYVRVADKVSGEQWILGQGCLSRWFSDPDTYEVIESFPGTALIGKSYEPPFNFFEQKRAEGAYTILPGSFVEESEGTGVVHMAPAFGEADFFVCKEHHVPMVCPVDNHGCFTEEIPEYQGQYIKSCDKGIIKSLKNQGKVFYHGTVVHRYPFCWRTDTPLIYKTVNSWFISVEKIKDKMLQANKKIHWVPEHIKEGRFGKWLEGARDWAISRNRYWGTPIPVWKSKDGDILVIGSVEELEKLTGEKVSDLHCHFVDQLKIEKDGKSFHRVPYVFDCWFDSGAMPYAQNHYPFENQKETESGFPADFIAEGLDQTRGWFYTLTVISAALFDQPVFKNAIVNGIVLAEDGNKMSKRLNNYPSPMSIMNTYGADALRLYLLDSVVVKAEDLRFSDKGVESVLKQVLLPLTNVLSFFKTYTDLYGFDANNYDKEEISYSEIDRWILSNLYTVVGKVRESMSSYNLNTAVNPFVTFIDDLTNWYIRRCRRRFWESADTPDRRAAFATLYEVLTVFCRVIAPFIPFISEDIYQQIKTENSLESVHLCDFPYIDLAKVFPDLEQRMGDAREIVGLGHSLRKEHKLKVRQPLANFYVVGPKDRLDQLDSFKQLISEELNVKNIVFYKEAPSFVKTTVKPNFRSLGRRVGEKIKDIQKALASLSQAQIQQLLTQEYLSLNLGSEEIVLHMEDVLISWETDPGYVARSSSLFTVVLDCQLTEELVVEAISRELVNKINTMRRNQKLHVSDRIVLRMQTSEEVRKAFLHYADYICEETLTTQSEFADVLEGEEWDINGHPTVIAIEVAARPH</sequence>
<feature type="chain" id="PRO_0000098530" description="Isoleucine--tRNA ligase">
    <location>
        <begin position="1"/>
        <end position="1043"/>
    </location>
</feature>
<feature type="short sequence motif" description="'HIGH' region">
    <location>
        <begin position="49"/>
        <end position="59"/>
    </location>
</feature>
<feature type="short sequence motif" description="'KMSKS' region">
    <location>
        <begin position="592"/>
        <end position="596"/>
    </location>
</feature>
<feature type="binding site" evidence="1">
    <location>
        <position position="595"/>
    </location>
    <ligand>
        <name>ATP</name>
        <dbReference type="ChEBI" id="CHEBI:30616"/>
    </ligand>
</feature>
<evidence type="ECO:0000255" key="1">
    <source>
        <dbReference type="HAMAP-Rule" id="MF_02003"/>
    </source>
</evidence>
<accession>Q5L5L0</accession>
<reference key="1">
    <citation type="journal article" date="2005" name="Genome Res.">
        <title>The Chlamydophila abortus genome sequence reveals an array of variable proteins that contribute to interspecies variation.</title>
        <authorList>
            <person name="Thomson N.R."/>
            <person name="Yeats C."/>
            <person name="Bell K."/>
            <person name="Holden M.T.G."/>
            <person name="Bentley S.D."/>
            <person name="Livingstone M."/>
            <person name="Cerdeno-Tarraga A.-M."/>
            <person name="Harris B."/>
            <person name="Doggett J."/>
            <person name="Ormond D."/>
            <person name="Mungall K."/>
            <person name="Clarke K."/>
            <person name="Feltwell T."/>
            <person name="Hance Z."/>
            <person name="Sanders M."/>
            <person name="Quail M.A."/>
            <person name="Price C."/>
            <person name="Barrell B.G."/>
            <person name="Parkhill J."/>
            <person name="Longbottom D."/>
        </authorList>
    </citation>
    <scope>NUCLEOTIDE SEQUENCE [LARGE SCALE GENOMIC DNA]</scope>
    <source>
        <strain>DSM 27085 / S26/3</strain>
    </source>
</reference>
<dbReference type="EC" id="6.1.1.5" evidence="1"/>
<dbReference type="EMBL" id="CR848038">
    <property type="protein sequence ID" value="CAH64081.1"/>
    <property type="molecule type" value="Genomic_DNA"/>
</dbReference>
<dbReference type="RefSeq" id="WP_011097220.1">
    <property type="nucleotide sequence ID" value="NC_004552.2"/>
</dbReference>
<dbReference type="SMR" id="Q5L5L0"/>
<dbReference type="KEGG" id="cab:CAB634"/>
<dbReference type="eggNOG" id="COG0060">
    <property type="taxonomic scope" value="Bacteria"/>
</dbReference>
<dbReference type="HOGENOM" id="CLU_001493_1_1_0"/>
<dbReference type="OrthoDB" id="9810365at2"/>
<dbReference type="Proteomes" id="UP000001012">
    <property type="component" value="Chromosome"/>
</dbReference>
<dbReference type="GO" id="GO:0005737">
    <property type="term" value="C:cytoplasm"/>
    <property type="evidence" value="ECO:0007669"/>
    <property type="project" value="UniProtKB-SubCell"/>
</dbReference>
<dbReference type="GO" id="GO:0002161">
    <property type="term" value="F:aminoacyl-tRNA deacylase activity"/>
    <property type="evidence" value="ECO:0007669"/>
    <property type="project" value="InterPro"/>
</dbReference>
<dbReference type="GO" id="GO:0005524">
    <property type="term" value="F:ATP binding"/>
    <property type="evidence" value="ECO:0007669"/>
    <property type="project" value="UniProtKB-UniRule"/>
</dbReference>
<dbReference type="GO" id="GO:0004822">
    <property type="term" value="F:isoleucine-tRNA ligase activity"/>
    <property type="evidence" value="ECO:0007669"/>
    <property type="project" value="UniProtKB-UniRule"/>
</dbReference>
<dbReference type="GO" id="GO:0000049">
    <property type="term" value="F:tRNA binding"/>
    <property type="evidence" value="ECO:0007669"/>
    <property type="project" value="InterPro"/>
</dbReference>
<dbReference type="GO" id="GO:0008270">
    <property type="term" value="F:zinc ion binding"/>
    <property type="evidence" value="ECO:0007669"/>
    <property type="project" value="UniProtKB-UniRule"/>
</dbReference>
<dbReference type="GO" id="GO:0006428">
    <property type="term" value="P:isoleucyl-tRNA aminoacylation"/>
    <property type="evidence" value="ECO:0007669"/>
    <property type="project" value="UniProtKB-UniRule"/>
</dbReference>
<dbReference type="CDD" id="cd07961">
    <property type="entry name" value="Anticodon_Ia_Ile_ABEc"/>
    <property type="match status" value="1"/>
</dbReference>
<dbReference type="CDD" id="cd00818">
    <property type="entry name" value="IleRS_core"/>
    <property type="match status" value="1"/>
</dbReference>
<dbReference type="FunFam" id="3.40.50.620:FF:000241">
    <property type="entry name" value="Isoleucine--tRNA ligase"/>
    <property type="match status" value="1"/>
</dbReference>
<dbReference type="FunFam" id="3.40.50.620:FF:000133">
    <property type="entry name" value="Isoleucyl-tRNA synthetase, cytoplasmic"/>
    <property type="match status" value="1"/>
</dbReference>
<dbReference type="Gene3D" id="3.40.50.620">
    <property type="entry name" value="HUPs"/>
    <property type="match status" value="2"/>
</dbReference>
<dbReference type="Gene3D" id="1.10.730.10">
    <property type="entry name" value="Isoleucyl-tRNA Synthetase, Domain 1"/>
    <property type="match status" value="1"/>
</dbReference>
<dbReference type="HAMAP" id="MF_02003">
    <property type="entry name" value="Ile_tRNA_synth_type2"/>
    <property type="match status" value="1"/>
</dbReference>
<dbReference type="InterPro" id="IPR001412">
    <property type="entry name" value="aa-tRNA-synth_I_CS"/>
</dbReference>
<dbReference type="InterPro" id="IPR002300">
    <property type="entry name" value="aa-tRNA-synth_Ia"/>
</dbReference>
<dbReference type="InterPro" id="IPR033709">
    <property type="entry name" value="Anticodon_Ile_ABEc"/>
</dbReference>
<dbReference type="InterPro" id="IPR002301">
    <property type="entry name" value="Ile-tRNA-ligase"/>
</dbReference>
<dbReference type="InterPro" id="IPR023586">
    <property type="entry name" value="Ile-tRNA-ligase_type2"/>
</dbReference>
<dbReference type="InterPro" id="IPR013155">
    <property type="entry name" value="M/V/L/I-tRNA-synth_anticd-bd"/>
</dbReference>
<dbReference type="InterPro" id="IPR014729">
    <property type="entry name" value="Rossmann-like_a/b/a_fold"/>
</dbReference>
<dbReference type="InterPro" id="IPR009080">
    <property type="entry name" value="tRNAsynth_Ia_anticodon-bd"/>
</dbReference>
<dbReference type="InterPro" id="IPR009008">
    <property type="entry name" value="Val/Leu/Ile-tRNA-synth_edit"/>
</dbReference>
<dbReference type="NCBIfam" id="TIGR00392">
    <property type="entry name" value="ileS"/>
    <property type="match status" value="1"/>
</dbReference>
<dbReference type="PANTHER" id="PTHR42780:SF1">
    <property type="entry name" value="ISOLEUCINE--TRNA LIGASE, CYTOPLASMIC"/>
    <property type="match status" value="1"/>
</dbReference>
<dbReference type="PANTHER" id="PTHR42780">
    <property type="entry name" value="SOLEUCYL-TRNA SYNTHETASE"/>
    <property type="match status" value="1"/>
</dbReference>
<dbReference type="Pfam" id="PF08264">
    <property type="entry name" value="Anticodon_1"/>
    <property type="match status" value="1"/>
</dbReference>
<dbReference type="Pfam" id="PF19302">
    <property type="entry name" value="DUF5915"/>
    <property type="match status" value="1"/>
</dbReference>
<dbReference type="Pfam" id="PF00133">
    <property type="entry name" value="tRNA-synt_1"/>
    <property type="match status" value="1"/>
</dbReference>
<dbReference type="PRINTS" id="PR00984">
    <property type="entry name" value="TRNASYNTHILE"/>
</dbReference>
<dbReference type="SUPFAM" id="SSF47323">
    <property type="entry name" value="Anticodon-binding domain of a subclass of class I aminoacyl-tRNA synthetases"/>
    <property type="match status" value="1"/>
</dbReference>
<dbReference type="SUPFAM" id="SSF52374">
    <property type="entry name" value="Nucleotidylyl transferase"/>
    <property type="match status" value="1"/>
</dbReference>
<dbReference type="SUPFAM" id="SSF50677">
    <property type="entry name" value="ValRS/IleRS/LeuRS editing domain"/>
    <property type="match status" value="1"/>
</dbReference>
<dbReference type="PROSITE" id="PS00178">
    <property type="entry name" value="AA_TRNA_LIGASE_I"/>
    <property type="match status" value="1"/>
</dbReference>
<keyword id="KW-0030">Aminoacyl-tRNA synthetase</keyword>
<keyword id="KW-0067">ATP-binding</keyword>
<keyword id="KW-0963">Cytoplasm</keyword>
<keyword id="KW-0436">Ligase</keyword>
<keyword id="KW-0479">Metal-binding</keyword>
<keyword id="KW-0547">Nucleotide-binding</keyword>
<keyword id="KW-0648">Protein biosynthesis</keyword>
<keyword id="KW-0862">Zinc</keyword>